<accession>Q5HX10</accession>
<dbReference type="EMBL" id="CP000025">
    <property type="protein sequence ID" value="AAW34746.1"/>
    <property type="molecule type" value="Genomic_DNA"/>
</dbReference>
<dbReference type="RefSeq" id="WP_002851603.1">
    <property type="nucleotide sequence ID" value="NC_003912.7"/>
</dbReference>
<dbReference type="SMR" id="Q5HX10"/>
<dbReference type="KEGG" id="cjr:CJE0151"/>
<dbReference type="HOGENOM" id="CLU_114306_4_3_7"/>
<dbReference type="GO" id="GO:1990904">
    <property type="term" value="C:ribonucleoprotein complex"/>
    <property type="evidence" value="ECO:0007669"/>
    <property type="project" value="UniProtKB-KW"/>
</dbReference>
<dbReference type="GO" id="GO:0005840">
    <property type="term" value="C:ribosome"/>
    <property type="evidence" value="ECO:0007669"/>
    <property type="project" value="UniProtKB-KW"/>
</dbReference>
<dbReference type="GO" id="GO:0046872">
    <property type="term" value="F:metal ion binding"/>
    <property type="evidence" value="ECO:0007669"/>
    <property type="project" value="UniProtKB-KW"/>
</dbReference>
<dbReference type="GO" id="GO:0019843">
    <property type="term" value="F:rRNA binding"/>
    <property type="evidence" value="ECO:0007669"/>
    <property type="project" value="UniProtKB-KW"/>
</dbReference>
<dbReference type="GO" id="GO:0003735">
    <property type="term" value="F:structural constituent of ribosome"/>
    <property type="evidence" value="ECO:0007669"/>
    <property type="project" value="InterPro"/>
</dbReference>
<dbReference type="GO" id="GO:0006412">
    <property type="term" value="P:translation"/>
    <property type="evidence" value="ECO:0007669"/>
    <property type="project" value="UniProtKB-UniRule"/>
</dbReference>
<dbReference type="Gene3D" id="4.10.830.30">
    <property type="entry name" value="Ribosomal protein L31"/>
    <property type="match status" value="1"/>
</dbReference>
<dbReference type="HAMAP" id="MF_00501">
    <property type="entry name" value="Ribosomal_bL31_1"/>
    <property type="match status" value="1"/>
</dbReference>
<dbReference type="InterPro" id="IPR034704">
    <property type="entry name" value="Ribosomal_bL28/bL31-like_sf"/>
</dbReference>
<dbReference type="InterPro" id="IPR002150">
    <property type="entry name" value="Ribosomal_bL31"/>
</dbReference>
<dbReference type="InterPro" id="IPR027491">
    <property type="entry name" value="Ribosomal_bL31_A"/>
</dbReference>
<dbReference type="InterPro" id="IPR042105">
    <property type="entry name" value="Ribosomal_bL31_sf"/>
</dbReference>
<dbReference type="NCBIfam" id="TIGR00105">
    <property type="entry name" value="L31"/>
    <property type="match status" value="1"/>
</dbReference>
<dbReference type="NCBIfam" id="NF000612">
    <property type="entry name" value="PRK00019.1"/>
    <property type="match status" value="1"/>
</dbReference>
<dbReference type="NCBIfam" id="NF001809">
    <property type="entry name" value="PRK00528.1"/>
    <property type="match status" value="1"/>
</dbReference>
<dbReference type="PANTHER" id="PTHR33280">
    <property type="entry name" value="50S RIBOSOMAL PROTEIN L31, CHLOROPLASTIC"/>
    <property type="match status" value="1"/>
</dbReference>
<dbReference type="PANTHER" id="PTHR33280:SF1">
    <property type="entry name" value="LARGE RIBOSOMAL SUBUNIT PROTEIN BL31C"/>
    <property type="match status" value="1"/>
</dbReference>
<dbReference type="Pfam" id="PF01197">
    <property type="entry name" value="Ribosomal_L31"/>
    <property type="match status" value="1"/>
</dbReference>
<dbReference type="PRINTS" id="PR01249">
    <property type="entry name" value="RIBOSOMALL31"/>
</dbReference>
<dbReference type="SUPFAM" id="SSF143800">
    <property type="entry name" value="L28p-like"/>
    <property type="match status" value="1"/>
</dbReference>
<dbReference type="PROSITE" id="PS01143">
    <property type="entry name" value="RIBOSOMAL_L31"/>
    <property type="match status" value="1"/>
</dbReference>
<gene>
    <name evidence="1" type="primary">rpmE</name>
    <name type="ordered locus">CJE0151</name>
</gene>
<evidence type="ECO:0000255" key="1">
    <source>
        <dbReference type="HAMAP-Rule" id="MF_00501"/>
    </source>
</evidence>
<evidence type="ECO:0000305" key="2"/>
<protein>
    <recommendedName>
        <fullName evidence="1">Large ribosomal subunit protein bL31</fullName>
    </recommendedName>
    <alternativeName>
        <fullName evidence="2">50S ribosomal protein L31</fullName>
    </alternativeName>
</protein>
<feature type="chain" id="PRO_0000173091" description="Large ribosomal subunit protein bL31">
    <location>
        <begin position="1"/>
        <end position="66"/>
    </location>
</feature>
<feature type="binding site" evidence="1">
    <location>
        <position position="16"/>
    </location>
    <ligand>
        <name>Zn(2+)</name>
        <dbReference type="ChEBI" id="CHEBI:29105"/>
    </ligand>
</feature>
<feature type="binding site" evidence="1">
    <location>
        <position position="18"/>
    </location>
    <ligand>
        <name>Zn(2+)</name>
        <dbReference type="ChEBI" id="CHEBI:29105"/>
    </ligand>
</feature>
<feature type="binding site" evidence="1">
    <location>
        <position position="36"/>
    </location>
    <ligand>
        <name>Zn(2+)</name>
        <dbReference type="ChEBI" id="CHEBI:29105"/>
    </ligand>
</feature>
<feature type="binding site" evidence="1">
    <location>
        <position position="39"/>
    </location>
    <ligand>
        <name>Zn(2+)</name>
        <dbReference type="ChEBI" id="CHEBI:29105"/>
    </ligand>
</feature>
<proteinExistence type="inferred from homology"/>
<reference key="1">
    <citation type="journal article" date="2005" name="PLoS Biol.">
        <title>Major structural differences and novel potential virulence mechanisms from the genomes of multiple Campylobacter species.</title>
        <authorList>
            <person name="Fouts D.E."/>
            <person name="Mongodin E.F."/>
            <person name="Mandrell R.E."/>
            <person name="Miller W.G."/>
            <person name="Rasko D.A."/>
            <person name="Ravel J."/>
            <person name="Brinkac L.M."/>
            <person name="DeBoy R.T."/>
            <person name="Parker C.T."/>
            <person name="Daugherty S.C."/>
            <person name="Dodson R.J."/>
            <person name="Durkin A.S."/>
            <person name="Madupu R."/>
            <person name="Sullivan S.A."/>
            <person name="Shetty J.U."/>
            <person name="Ayodeji M.A."/>
            <person name="Shvartsbeyn A."/>
            <person name="Schatz M.C."/>
            <person name="Badger J.H."/>
            <person name="Fraser C.M."/>
            <person name="Nelson K.E."/>
        </authorList>
    </citation>
    <scope>NUCLEOTIDE SEQUENCE [LARGE SCALE GENOMIC DNA]</scope>
    <source>
        <strain>RM1221</strain>
    </source>
</reference>
<name>RL31_CAMJR</name>
<sequence length="66" mass="7477">MKKEIHPEYVECKVSCACGNTFTTKSNKAELRVDICSNCHPFFTGSEKIVDAAGRVEKFKKKYAMQ</sequence>
<comment type="function">
    <text evidence="1">Binds the 23S rRNA.</text>
</comment>
<comment type="cofactor">
    <cofactor evidence="1">
        <name>Zn(2+)</name>
        <dbReference type="ChEBI" id="CHEBI:29105"/>
    </cofactor>
    <text evidence="1">Binds 1 zinc ion per subunit.</text>
</comment>
<comment type="subunit">
    <text evidence="1">Part of the 50S ribosomal subunit.</text>
</comment>
<comment type="similarity">
    <text evidence="1">Belongs to the bacterial ribosomal protein bL31 family. Type A subfamily.</text>
</comment>
<organism>
    <name type="scientific">Campylobacter jejuni (strain RM1221)</name>
    <dbReference type="NCBI Taxonomy" id="195099"/>
    <lineage>
        <taxon>Bacteria</taxon>
        <taxon>Pseudomonadati</taxon>
        <taxon>Campylobacterota</taxon>
        <taxon>Epsilonproteobacteria</taxon>
        <taxon>Campylobacterales</taxon>
        <taxon>Campylobacteraceae</taxon>
        <taxon>Campylobacter</taxon>
    </lineage>
</organism>
<keyword id="KW-0479">Metal-binding</keyword>
<keyword id="KW-0687">Ribonucleoprotein</keyword>
<keyword id="KW-0689">Ribosomal protein</keyword>
<keyword id="KW-0694">RNA-binding</keyword>
<keyword id="KW-0699">rRNA-binding</keyword>
<keyword id="KW-0862">Zinc</keyword>